<dbReference type="EC" id="7.1.1.2"/>
<dbReference type="EMBL" id="X56612">
    <property type="protein sequence ID" value="CAA39949.1"/>
    <property type="molecule type" value="Genomic_DNA"/>
</dbReference>
<dbReference type="EMBL" id="BX908789">
    <property type="protein sequence ID" value="CAF05866.1"/>
    <property type="molecule type" value="Genomic_DNA"/>
</dbReference>
<dbReference type="EMBL" id="CM002242">
    <property type="protein sequence ID" value="EAA30688.1"/>
    <property type="molecule type" value="Genomic_DNA"/>
</dbReference>
<dbReference type="PIR" id="S14277">
    <property type="entry name" value="S14277"/>
</dbReference>
<dbReference type="SMR" id="P25710"/>
<dbReference type="STRING" id="367110.P25710"/>
<dbReference type="TCDB" id="3.D.1.6.2">
    <property type="family name" value="the h+ or na+-translocating nadh dehydrogenase (ndh) family"/>
</dbReference>
<dbReference type="PaxDb" id="5141-EFNCRP00000003209"/>
<dbReference type="EnsemblFungi" id="EAA30688">
    <property type="protein sequence ID" value="EAA30688"/>
    <property type="gene ID" value="NCU02280"/>
</dbReference>
<dbReference type="KEGG" id="ncr:NCU02280"/>
<dbReference type="VEuPathDB" id="FungiDB:NCU02280"/>
<dbReference type="HOGENOM" id="CLU_088319_0_0_1"/>
<dbReference type="InParanoid" id="P25710"/>
<dbReference type="OMA" id="TMMNLRE"/>
<dbReference type="OrthoDB" id="1913277at2759"/>
<dbReference type="Proteomes" id="UP000001805">
    <property type="component" value="Chromosome 7, Linkage Group VII"/>
</dbReference>
<dbReference type="GO" id="GO:0005743">
    <property type="term" value="C:mitochondrial inner membrane"/>
    <property type="evidence" value="ECO:0007669"/>
    <property type="project" value="UniProtKB-SubCell"/>
</dbReference>
<dbReference type="GO" id="GO:0045271">
    <property type="term" value="C:respiratory chain complex I"/>
    <property type="evidence" value="ECO:0000318"/>
    <property type="project" value="GO_Central"/>
</dbReference>
<dbReference type="GO" id="GO:0008137">
    <property type="term" value="F:NADH dehydrogenase (ubiquinone) activity"/>
    <property type="evidence" value="ECO:0007669"/>
    <property type="project" value="UniProtKB-EC"/>
</dbReference>
<dbReference type="GO" id="GO:0006120">
    <property type="term" value="P:mitochondrial electron transport, NADH to ubiquinone"/>
    <property type="evidence" value="ECO:0007669"/>
    <property type="project" value="InterPro"/>
</dbReference>
<dbReference type="InterPro" id="IPR039205">
    <property type="entry name" value="NDUFA11"/>
</dbReference>
<dbReference type="PANTHER" id="PTHR21382:SF1">
    <property type="entry name" value="NADH DEHYDROGENASE [UBIQUINONE] 1 ALPHA SUBCOMPLEX SUBUNIT 11"/>
    <property type="match status" value="1"/>
</dbReference>
<dbReference type="PANTHER" id="PTHR21382">
    <property type="entry name" value="NADH-UBIQUINONE OXIDOREDUCTASE SUBUNIT"/>
    <property type="match status" value="1"/>
</dbReference>
<comment type="function">
    <text>Transfer of electrons from NADH to the respiratory chain. The immediate electron acceptor for the enzyme is believed to be ubiquinone.</text>
</comment>
<comment type="catalytic activity">
    <reaction>
        <text>a ubiquinone + NADH + 5 H(+)(in) = a ubiquinol + NAD(+) + 4 H(+)(out)</text>
        <dbReference type="Rhea" id="RHEA:29091"/>
        <dbReference type="Rhea" id="RHEA-COMP:9565"/>
        <dbReference type="Rhea" id="RHEA-COMP:9566"/>
        <dbReference type="ChEBI" id="CHEBI:15378"/>
        <dbReference type="ChEBI" id="CHEBI:16389"/>
        <dbReference type="ChEBI" id="CHEBI:17976"/>
        <dbReference type="ChEBI" id="CHEBI:57540"/>
        <dbReference type="ChEBI" id="CHEBI:57945"/>
        <dbReference type="EC" id="7.1.1.2"/>
    </reaction>
</comment>
<comment type="subunit">
    <text>Complex I is composed of about 40 different subunits.</text>
</comment>
<comment type="subcellular location">
    <subcellularLocation>
        <location evidence="2">Mitochondrion inner membrane</location>
        <topology evidence="2">Multi-pass membrane protein</topology>
    </subcellularLocation>
</comment>
<reference key="1">
    <citation type="journal article" date="1991" name="Biochim. Biophys. Acta">
        <title>cDNA and genomic DNA sequence of the 21.3 kDa subunit of NADH:ubiquinone reductase (complex I) from Neurospora crassa.</title>
        <authorList>
            <person name="Nehls U."/>
            <person name="Hemmer S."/>
            <person name="Roehlen D.-A."/>
            <person name="van der Pas J.C."/>
            <person name="Preis D."/>
            <person name="Sackmann U."/>
            <person name="Weiss H."/>
        </authorList>
    </citation>
    <scope>NUCLEOTIDE SEQUENCE [GENOMIC DNA]</scope>
    <source>
        <strain>74-ORS-6a / FGSC 4200</strain>
    </source>
</reference>
<reference key="2">
    <citation type="journal article" date="2003" name="Nucleic Acids Res.">
        <title>What's in the genome of a filamentous fungus? Analysis of the Neurospora genome sequence.</title>
        <authorList>
            <person name="Mannhaupt G."/>
            <person name="Montrone C."/>
            <person name="Haase D."/>
            <person name="Mewes H.-W."/>
            <person name="Aign V."/>
            <person name="Hoheisel J.D."/>
            <person name="Fartmann B."/>
            <person name="Nyakatura G."/>
            <person name="Kempken F."/>
            <person name="Maier J."/>
            <person name="Schulte U."/>
        </authorList>
    </citation>
    <scope>NUCLEOTIDE SEQUENCE [LARGE SCALE GENOMIC DNA]</scope>
    <source>
        <strain>ATCC 24698 / 74-OR23-1A / CBS 708.71 / DSM 1257 / FGSC 987</strain>
    </source>
</reference>
<reference key="3">
    <citation type="journal article" date="2003" name="Nature">
        <title>The genome sequence of the filamentous fungus Neurospora crassa.</title>
        <authorList>
            <person name="Galagan J.E."/>
            <person name="Calvo S.E."/>
            <person name="Borkovich K.A."/>
            <person name="Selker E.U."/>
            <person name="Read N.D."/>
            <person name="Jaffe D.B."/>
            <person name="FitzHugh W."/>
            <person name="Ma L.-J."/>
            <person name="Smirnov S."/>
            <person name="Purcell S."/>
            <person name="Rehman B."/>
            <person name="Elkins T."/>
            <person name="Engels R."/>
            <person name="Wang S."/>
            <person name="Nielsen C.B."/>
            <person name="Butler J."/>
            <person name="Endrizzi M."/>
            <person name="Qui D."/>
            <person name="Ianakiev P."/>
            <person name="Bell-Pedersen D."/>
            <person name="Nelson M.A."/>
            <person name="Werner-Washburne M."/>
            <person name="Selitrennikoff C.P."/>
            <person name="Kinsey J.A."/>
            <person name="Braun E.L."/>
            <person name="Zelter A."/>
            <person name="Schulte U."/>
            <person name="Kothe G.O."/>
            <person name="Jedd G."/>
            <person name="Mewes H.-W."/>
            <person name="Staben C."/>
            <person name="Marcotte E."/>
            <person name="Greenberg D."/>
            <person name="Roy A."/>
            <person name="Foley K."/>
            <person name="Naylor J."/>
            <person name="Stange-Thomann N."/>
            <person name="Barrett R."/>
            <person name="Gnerre S."/>
            <person name="Kamal M."/>
            <person name="Kamvysselis M."/>
            <person name="Mauceli E.W."/>
            <person name="Bielke C."/>
            <person name="Rudd S."/>
            <person name="Frishman D."/>
            <person name="Krystofova S."/>
            <person name="Rasmussen C."/>
            <person name="Metzenberg R.L."/>
            <person name="Perkins D.D."/>
            <person name="Kroken S."/>
            <person name="Cogoni C."/>
            <person name="Macino G."/>
            <person name="Catcheside D.E.A."/>
            <person name="Li W."/>
            <person name="Pratt R.J."/>
            <person name="Osmani S.A."/>
            <person name="DeSouza C.P.C."/>
            <person name="Glass N.L."/>
            <person name="Orbach M.J."/>
            <person name="Berglund J.A."/>
            <person name="Voelker R."/>
            <person name="Yarden O."/>
            <person name="Plamann M."/>
            <person name="Seiler S."/>
            <person name="Dunlap J.C."/>
            <person name="Radford A."/>
            <person name="Aramayo R."/>
            <person name="Natvig D.O."/>
            <person name="Alex L.A."/>
            <person name="Mannhaupt G."/>
            <person name="Ebbole D.J."/>
            <person name="Freitag M."/>
            <person name="Paulsen I."/>
            <person name="Sachs M.S."/>
            <person name="Lander E.S."/>
            <person name="Nusbaum C."/>
            <person name="Birren B.W."/>
        </authorList>
    </citation>
    <scope>NUCLEOTIDE SEQUENCE [LARGE SCALE GENOMIC DNA]</scope>
    <source>
        <strain>ATCC 24698 / 74-OR23-1A / CBS 708.71 / DSM 1257 / FGSC 987</strain>
    </source>
</reference>
<sequence length="200" mass="21349">MAPQGDDTVFQPKDAIKSGVSGALFSGGAGLLMASLRTSMKKNNVGSMHVFTHGGGTIISFTLAGGIYRFAQQASANLREKEDGWNHAIGAFLGGSVMGLRSLRFPVILGFGAMAGSVVGAFAFSGGLTGWGRDPNVDEFERKEAMRLNRRRPVEETLAEVGEGRGIYPPGYQERRRQRLLEKYGVEVKPVSADPNVASA</sequence>
<gene>
    <name type="ORF">B13D24.010</name>
    <name type="ORF">NCU02280</name>
</gene>
<evidence type="ECO:0000255" key="1"/>
<evidence type="ECO:0000305" key="2"/>
<proteinExistence type="predicted"/>
<name>NUJM_NEUCR</name>
<feature type="chain" id="PRO_0000118738" description="NADH-ubiquinone oxidoreductase 21.3 kDa subunit">
    <location>
        <begin position="1"/>
        <end position="200"/>
    </location>
</feature>
<feature type="transmembrane region" description="Helical" evidence="1">
    <location>
        <begin position="16"/>
        <end position="36"/>
    </location>
</feature>
<feature type="transmembrane region" description="Helical" evidence="1">
    <location>
        <begin position="48"/>
        <end position="68"/>
    </location>
</feature>
<feature type="transmembrane region" description="Helical" evidence="1">
    <location>
        <begin position="105"/>
        <end position="125"/>
    </location>
</feature>
<accession>P25710</accession>
<accession>Q7S588</accession>
<organism>
    <name type="scientific">Neurospora crassa (strain ATCC 24698 / 74-OR23-1A / CBS 708.71 / DSM 1257 / FGSC 987)</name>
    <dbReference type="NCBI Taxonomy" id="367110"/>
    <lineage>
        <taxon>Eukaryota</taxon>
        <taxon>Fungi</taxon>
        <taxon>Dikarya</taxon>
        <taxon>Ascomycota</taxon>
        <taxon>Pezizomycotina</taxon>
        <taxon>Sordariomycetes</taxon>
        <taxon>Sordariomycetidae</taxon>
        <taxon>Sordariales</taxon>
        <taxon>Sordariaceae</taxon>
        <taxon>Neurospora</taxon>
    </lineage>
</organism>
<protein>
    <recommendedName>
        <fullName>NADH-ubiquinone oxidoreductase 21.3 kDa subunit</fullName>
        <ecNumber>7.1.1.2</ecNumber>
    </recommendedName>
</protein>
<keyword id="KW-0472">Membrane</keyword>
<keyword id="KW-0496">Mitochondrion</keyword>
<keyword id="KW-0999">Mitochondrion inner membrane</keyword>
<keyword id="KW-0520">NAD</keyword>
<keyword id="KW-0560">Oxidoreductase</keyword>
<keyword id="KW-1185">Reference proteome</keyword>
<keyword id="KW-1278">Translocase</keyword>
<keyword id="KW-0812">Transmembrane</keyword>
<keyword id="KW-1133">Transmembrane helix</keyword>
<keyword id="KW-0830">Ubiquinone</keyword>